<dbReference type="EC" id="1.-.-.-" evidence="11"/>
<dbReference type="EMBL" id="HM171111">
    <property type="protein sequence ID" value="AAK11527.1"/>
    <property type="molecule type" value="Genomic_DNA"/>
</dbReference>
<dbReference type="SMR" id="Q9C450"/>
<dbReference type="KEGG" id="ag:AAK11527"/>
<dbReference type="BioCyc" id="MetaCyc:MONOMER-18639"/>
<dbReference type="GO" id="GO:0016020">
    <property type="term" value="C:membrane"/>
    <property type="evidence" value="ECO:0007669"/>
    <property type="project" value="UniProtKB-SubCell"/>
</dbReference>
<dbReference type="GO" id="GO:0020037">
    <property type="term" value="F:heme binding"/>
    <property type="evidence" value="ECO:0007669"/>
    <property type="project" value="InterPro"/>
</dbReference>
<dbReference type="GO" id="GO:0005506">
    <property type="term" value="F:iron ion binding"/>
    <property type="evidence" value="ECO:0007669"/>
    <property type="project" value="InterPro"/>
</dbReference>
<dbReference type="GO" id="GO:0004497">
    <property type="term" value="F:monooxygenase activity"/>
    <property type="evidence" value="ECO:0000314"/>
    <property type="project" value="GO_Central"/>
</dbReference>
<dbReference type="GO" id="GO:0016705">
    <property type="term" value="F:oxidoreductase activity, acting on paired donors, with incorporation or reduction of molecular oxygen"/>
    <property type="evidence" value="ECO:0007669"/>
    <property type="project" value="InterPro"/>
</dbReference>
<dbReference type="GO" id="GO:0140873">
    <property type="term" value="P:paxilline biosynthetic process"/>
    <property type="evidence" value="ECO:0000314"/>
    <property type="project" value="GO_Central"/>
</dbReference>
<dbReference type="CDD" id="cd11041">
    <property type="entry name" value="CYP503A1-like"/>
    <property type="match status" value="1"/>
</dbReference>
<dbReference type="Gene3D" id="1.10.630.10">
    <property type="entry name" value="Cytochrome P450"/>
    <property type="match status" value="1"/>
</dbReference>
<dbReference type="InterPro" id="IPR001128">
    <property type="entry name" value="Cyt_P450"/>
</dbReference>
<dbReference type="InterPro" id="IPR017972">
    <property type="entry name" value="Cyt_P450_CS"/>
</dbReference>
<dbReference type="InterPro" id="IPR002401">
    <property type="entry name" value="Cyt_P450_E_grp-I"/>
</dbReference>
<dbReference type="InterPro" id="IPR036396">
    <property type="entry name" value="Cyt_P450_sf"/>
</dbReference>
<dbReference type="PANTHER" id="PTHR46206">
    <property type="entry name" value="CYTOCHROME P450"/>
    <property type="match status" value="1"/>
</dbReference>
<dbReference type="PANTHER" id="PTHR46206:SF5">
    <property type="entry name" value="P450, PUTATIVE (EUROFUNG)-RELATED"/>
    <property type="match status" value="1"/>
</dbReference>
<dbReference type="Pfam" id="PF00067">
    <property type="entry name" value="p450"/>
    <property type="match status" value="1"/>
</dbReference>
<dbReference type="PRINTS" id="PR00463">
    <property type="entry name" value="EP450I"/>
</dbReference>
<dbReference type="SUPFAM" id="SSF48264">
    <property type="entry name" value="Cytochrome P450"/>
    <property type="match status" value="1"/>
</dbReference>
<dbReference type="PROSITE" id="PS00086">
    <property type="entry name" value="CYTOCHROME_P450"/>
    <property type="match status" value="1"/>
</dbReference>
<gene>
    <name evidence="7" type="primary">paxQ</name>
</gene>
<keyword id="KW-0349">Heme</keyword>
<keyword id="KW-0408">Iron</keyword>
<keyword id="KW-0472">Membrane</keyword>
<keyword id="KW-0479">Metal-binding</keyword>
<keyword id="KW-0503">Monooxygenase</keyword>
<keyword id="KW-0560">Oxidoreductase</keyword>
<keyword id="KW-0812">Transmembrane</keyword>
<keyword id="KW-1133">Transmembrane helix</keyword>
<accession>Q9C450</accession>
<reference key="1">
    <citation type="journal article" date="2001" name="Mol. Microbiol.">
        <title>Molecular cloning and genetic analysis of an indole-diterpene gene cluster from Penicillium paxilli.</title>
        <authorList>
            <person name="Young C."/>
            <person name="McMillan L."/>
            <person name="Telfer E."/>
            <person name="Scott B."/>
        </authorList>
    </citation>
    <scope>NUCLEOTIDE SEQUENCE [GENOMIC DNA]</scope>
    <scope>FUNCTION</scope>
    <source>
        <strain>PN2013</strain>
    </source>
</reference>
<reference key="2">
    <citation type="journal article" date="2013" name="Toxins">
        <title>Deletion and gene expression analyses define the paxilline biosynthetic gene cluster in Penicillium paxilli.</title>
        <authorList>
            <person name="Scott B."/>
            <person name="Young C.A."/>
            <person name="Saikia S."/>
            <person name="McMillan L.K."/>
            <person name="Monahan B.J."/>
            <person name="Koulman A."/>
            <person name="Astin J."/>
            <person name="Eaton C.J."/>
            <person name="Bryant A."/>
            <person name="Wrenn R.E."/>
            <person name="Finch S.C."/>
            <person name="Tapper B.A."/>
            <person name="Parker E.J."/>
            <person name="Jameson G.B."/>
        </authorList>
    </citation>
    <scope>NUCLEOTIDE SEQUENCE [GENOMIC DNA]</scope>
    <scope>FUNCTION</scope>
    <scope>DISRUPTION PHENOTYPE</scope>
    <source>
        <strain>PN2013</strain>
    </source>
</reference>
<reference key="3">
    <citation type="journal article" date="2003" name="Mol. Genet. Genomics">
        <title>Molecular analysis of two cytochrome P450 monooxygenase genes required for paxilline biosynthesis in Penicillium paxilli, and effects of paxilline intermediates on mammalian maxi-K ion channels.</title>
        <authorList>
            <person name="McMillan L.K."/>
            <person name="Carr R.L."/>
            <person name="Young C.A."/>
            <person name="Astin J.W."/>
            <person name="Lowe R.G."/>
            <person name="Parker E.J."/>
            <person name="Jameson G.B."/>
            <person name="Finch S.C."/>
            <person name="Miles C.O."/>
            <person name="McManus O.B."/>
            <person name="Schmalhofer W.A."/>
            <person name="Garcia M.L."/>
            <person name="Kaczorowski G.J."/>
            <person name="Goetz M."/>
            <person name="Tkacz J.S."/>
            <person name="Scott B."/>
        </authorList>
    </citation>
    <scope>FUNCTION</scope>
    <scope>DISRUPTION PHENOTYPE</scope>
</reference>
<reference key="4">
    <citation type="journal article" date="2007" name="J. Biol. Chem.">
        <title>Defining paxilline biosynthesis in Penicillium paxilli: functional characterization of two cytochrome P450 monooxygenases.</title>
        <authorList>
            <person name="Saikia S."/>
            <person name="Parker E.J."/>
            <person name="Koulman A."/>
            <person name="Scott B."/>
        </authorList>
    </citation>
    <scope>FUNCTION</scope>
    <scope>CATALYTIC ACTIVITY</scope>
</reference>
<evidence type="ECO:0000250" key="1">
    <source>
        <dbReference type="UniProtKB" id="P04798"/>
    </source>
</evidence>
<evidence type="ECO:0000255" key="2"/>
<evidence type="ECO:0000269" key="3">
    <source>
    </source>
</evidence>
<evidence type="ECO:0000269" key="4">
    <source>
    </source>
</evidence>
<evidence type="ECO:0000269" key="5">
    <source>
    </source>
</evidence>
<evidence type="ECO:0000269" key="6">
    <source>
    </source>
</evidence>
<evidence type="ECO:0000303" key="7">
    <source>
    </source>
</evidence>
<evidence type="ECO:0000303" key="8">
    <source>
    </source>
</evidence>
<evidence type="ECO:0000305" key="9"/>
<evidence type="ECO:0000305" key="10">
    <source>
    </source>
</evidence>
<evidence type="ECO:0000305" key="11">
    <source>
    </source>
</evidence>
<evidence type="ECO:0000305" key="12">
    <source>
    </source>
</evidence>
<proteinExistence type="evidence at protein level"/>
<sequence length="512" mass="58228">MDFVLSALQRDSWGIAAIILVSIWALHSFHRSRKLQIPVPYVGKCGILGPWISALQWESKARELVQEGYEKHGNFAFKVALLNRWEVCICNEDMIREYKNLMDNQFSAIAVTSELFQIKWTAPGTEEGAHKISIPLLGKALTWQRNRSAAQNDPYFSEFVEEFLYAWKEEVPVPENGDYELPCFETGARVVAHLTARSLVGYPLCRNPEIVNLFTDYGSAVPTSGFFIAMFPEIMKPFVANFCSAPRISKRLQAILLEEFAKRREEGGIESTDIMGWLRNWTDQNEPGVYGDLEITSSIIATIFGAIHTTTQVLVHCLFELATRPEYVEPLRVEIQSALEEHGGWVKEGIEGMVKLDSFIKECQRFNPLDAGSLARRATKDFTFKNGLTIPEGTFVFAPNGPILFDDTLYPEARQFDGYRFYNLGQKTGKPQDFRFAATNQKYLQFGDGRHTCPGRWMASDEIRLMLAHILMNYDIATKDNKGRPENWIFKKILFPDMKAVVILKARKSVSA</sequence>
<protein>
    <recommendedName>
        <fullName evidence="8">Cytochrome P450 monooxygenase paxQ</fullName>
        <ecNumber evidence="11">1.-.-.-</ecNumber>
    </recommendedName>
    <alternativeName>
        <fullName evidence="7">Paxilline synthesis protein Q</fullName>
    </alternativeName>
</protein>
<name>PAXQ_PENPX</name>
<comment type="function">
    <text evidence="3 4 5 6">Cytochrome P450 monooxygenase; part of the gene cluster that mediates the biosynthesis of paxilline, a mycotoxin that acts as an inhibitor of mammalian maxi-K channels (PubMed:11169115, PubMed:23949005). PaxG, the geranylgeranyl diphosphate (GGPP) synthase is proposed to catalyze the first step in paxilline biosynthesis (PubMed:23949005). Condensation of indole-3-glycerol phosphate with GGPP by paxC then forms 3-geranylgeranylindole (3-GGI), followed by epoxidation and cyclization of this intermediate (by paxM and paxB) to form paspaline (PubMed:23949005). Paspaline is subsequently converted to 13-desoxypaxilline by paxP, the latter being then converted to paxilline by paxQ (PubMed:17428785, PubMed:23949005). Finally paxilline can be mono- and di-prenylated by paxD (PubMed:23949005). PaxQ can also utilized beta-paxitriol and alpha-PC-M6 as substrates converting them to alpha-paxitriol (PubMed:17428785).</text>
</comment>
<comment type="cofactor">
    <cofactor evidence="1">
        <name>heme</name>
        <dbReference type="ChEBI" id="CHEBI:30413"/>
    </cofactor>
</comment>
<comment type="pathway">
    <text evidence="5 10 12">Secondary metabolite biosynthesis.</text>
</comment>
<comment type="subcellular location">
    <subcellularLocation>
        <location evidence="2">Membrane</location>
        <topology evidence="2">Multi-pass membrane protein</topology>
    </subcellularLocation>
</comment>
<comment type="disruption phenotype">
    <text evidence="4 6">Impairs the production of paxilline (PubMed:23949005). Leads to the accumulation of the 13-desoxypaxillin intermediate (PubMed:12884010).</text>
</comment>
<comment type="similarity">
    <text evidence="9">Belongs to the cytochrome P450 family.</text>
</comment>
<feature type="chain" id="PRO_0000436127" description="Cytochrome P450 monooxygenase paxQ">
    <location>
        <begin position="1"/>
        <end position="512"/>
    </location>
</feature>
<feature type="transmembrane region" description="Helical" evidence="2">
    <location>
        <begin position="3"/>
        <end position="23"/>
    </location>
</feature>
<feature type="transmembrane region" description="Helical" evidence="2">
    <location>
        <begin position="35"/>
        <end position="55"/>
    </location>
</feature>
<feature type="binding site" description="axial binding residue" evidence="1">
    <location>
        <position position="453"/>
    </location>
    <ligand>
        <name>heme</name>
        <dbReference type="ChEBI" id="CHEBI:30413"/>
    </ligand>
    <ligandPart>
        <name>Fe</name>
        <dbReference type="ChEBI" id="CHEBI:18248"/>
    </ligandPart>
</feature>
<organism>
    <name type="scientific">Penicillium paxilli</name>
    <dbReference type="NCBI Taxonomy" id="70109"/>
    <lineage>
        <taxon>Eukaryota</taxon>
        <taxon>Fungi</taxon>
        <taxon>Dikarya</taxon>
        <taxon>Ascomycota</taxon>
        <taxon>Pezizomycotina</taxon>
        <taxon>Eurotiomycetes</taxon>
        <taxon>Eurotiomycetidae</taxon>
        <taxon>Eurotiales</taxon>
        <taxon>Aspergillaceae</taxon>
        <taxon>Penicillium</taxon>
    </lineage>
</organism>